<protein>
    <recommendedName>
        <fullName evidence="1">Ribosome-binding factor A</fullName>
    </recommendedName>
</protein>
<sequence>MAKNKFHDGPGPSQRQLRVGEVIRRTLSEVLARGDVHDPDLNRMSITVGEVRTSPDLKIATAYVLPLGGRGQEDVVQLLSRNKGELRRMIGKKLGLKFTPDLRFRLDETFDRLDDTRRMFDQDAVRRDLDE</sequence>
<dbReference type="EMBL" id="CP000031">
    <property type="protein sequence ID" value="AAV97049.1"/>
    <property type="molecule type" value="Genomic_DNA"/>
</dbReference>
<dbReference type="RefSeq" id="WP_011049506.1">
    <property type="nucleotide sequence ID" value="NC_003911.12"/>
</dbReference>
<dbReference type="SMR" id="Q5LLT6"/>
<dbReference type="STRING" id="246200.SPO3835"/>
<dbReference type="PaxDb" id="246200-SPO3835"/>
<dbReference type="KEGG" id="sil:SPO3835"/>
<dbReference type="eggNOG" id="COG0858">
    <property type="taxonomic scope" value="Bacteria"/>
</dbReference>
<dbReference type="HOGENOM" id="CLU_089475_1_0_5"/>
<dbReference type="OrthoDB" id="9805051at2"/>
<dbReference type="Proteomes" id="UP000001023">
    <property type="component" value="Chromosome"/>
</dbReference>
<dbReference type="GO" id="GO:0005829">
    <property type="term" value="C:cytosol"/>
    <property type="evidence" value="ECO:0007669"/>
    <property type="project" value="TreeGrafter"/>
</dbReference>
<dbReference type="GO" id="GO:0043024">
    <property type="term" value="F:ribosomal small subunit binding"/>
    <property type="evidence" value="ECO:0007669"/>
    <property type="project" value="TreeGrafter"/>
</dbReference>
<dbReference type="GO" id="GO:0030490">
    <property type="term" value="P:maturation of SSU-rRNA"/>
    <property type="evidence" value="ECO:0007669"/>
    <property type="project" value="UniProtKB-UniRule"/>
</dbReference>
<dbReference type="Gene3D" id="3.30.300.20">
    <property type="match status" value="1"/>
</dbReference>
<dbReference type="HAMAP" id="MF_00003">
    <property type="entry name" value="RbfA"/>
    <property type="match status" value="1"/>
</dbReference>
<dbReference type="InterPro" id="IPR015946">
    <property type="entry name" value="KH_dom-like_a/b"/>
</dbReference>
<dbReference type="InterPro" id="IPR000238">
    <property type="entry name" value="RbfA"/>
</dbReference>
<dbReference type="InterPro" id="IPR023799">
    <property type="entry name" value="RbfA_dom_sf"/>
</dbReference>
<dbReference type="InterPro" id="IPR020053">
    <property type="entry name" value="Ribosome-bd_factorA_CS"/>
</dbReference>
<dbReference type="NCBIfam" id="NF001802">
    <property type="entry name" value="PRK00521.2-5"/>
    <property type="match status" value="1"/>
</dbReference>
<dbReference type="PANTHER" id="PTHR33515">
    <property type="entry name" value="RIBOSOME-BINDING FACTOR A, CHLOROPLASTIC-RELATED"/>
    <property type="match status" value="1"/>
</dbReference>
<dbReference type="PANTHER" id="PTHR33515:SF1">
    <property type="entry name" value="RIBOSOME-BINDING FACTOR A, CHLOROPLASTIC-RELATED"/>
    <property type="match status" value="1"/>
</dbReference>
<dbReference type="Pfam" id="PF02033">
    <property type="entry name" value="RBFA"/>
    <property type="match status" value="1"/>
</dbReference>
<dbReference type="SUPFAM" id="SSF89919">
    <property type="entry name" value="Ribosome-binding factor A, RbfA"/>
    <property type="match status" value="1"/>
</dbReference>
<dbReference type="PROSITE" id="PS01319">
    <property type="entry name" value="RBFA"/>
    <property type="match status" value="1"/>
</dbReference>
<accession>Q5LLT6</accession>
<comment type="function">
    <text evidence="1">One of several proteins that assist in the late maturation steps of the functional core of the 30S ribosomal subunit. Associates with free 30S ribosomal subunits (but not with 30S subunits that are part of 70S ribosomes or polysomes). Required for efficient processing of 16S rRNA. May interact with the 5'-terminal helix region of 16S rRNA.</text>
</comment>
<comment type="subunit">
    <text evidence="1">Monomer. Binds 30S ribosomal subunits, but not 50S ribosomal subunits or 70S ribosomes.</text>
</comment>
<comment type="subcellular location">
    <subcellularLocation>
        <location evidence="1">Cytoplasm</location>
    </subcellularLocation>
</comment>
<comment type="similarity">
    <text evidence="1">Belongs to the RbfA family.</text>
</comment>
<evidence type="ECO:0000255" key="1">
    <source>
        <dbReference type="HAMAP-Rule" id="MF_00003"/>
    </source>
</evidence>
<keyword id="KW-0963">Cytoplasm</keyword>
<keyword id="KW-1185">Reference proteome</keyword>
<keyword id="KW-0690">Ribosome biogenesis</keyword>
<proteinExistence type="inferred from homology"/>
<name>RBFA_RUEPO</name>
<gene>
    <name evidence="1" type="primary">rbfA</name>
    <name type="ordered locus">SPO3835</name>
</gene>
<feature type="chain" id="PRO_0000102729" description="Ribosome-binding factor A">
    <location>
        <begin position="1"/>
        <end position="131"/>
    </location>
</feature>
<organism>
    <name type="scientific">Ruegeria pomeroyi (strain ATCC 700808 / DSM 15171 / DSS-3)</name>
    <name type="common">Silicibacter pomeroyi</name>
    <dbReference type="NCBI Taxonomy" id="246200"/>
    <lineage>
        <taxon>Bacteria</taxon>
        <taxon>Pseudomonadati</taxon>
        <taxon>Pseudomonadota</taxon>
        <taxon>Alphaproteobacteria</taxon>
        <taxon>Rhodobacterales</taxon>
        <taxon>Roseobacteraceae</taxon>
        <taxon>Ruegeria</taxon>
    </lineage>
</organism>
<reference key="1">
    <citation type="journal article" date="2004" name="Nature">
        <title>Genome sequence of Silicibacter pomeroyi reveals adaptations to the marine environment.</title>
        <authorList>
            <person name="Moran M.A."/>
            <person name="Buchan A."/>
            <person name="Gonzalez J.M."/>
            <person name="Heidelberg J.F."/>
            <person name="Whitman W.B."/>
            <person name="Kiene R.P."/>
            <person name="Henriksen J.R."/>
            <person name="King G.M."/>
            <person name="Belas R."/>
            <person name="Fuqua C."/>
            <person name="Brinkac L.M."/>
            <person name="Lewis M."/>
            <person name="Johri S."/>
            <person name="Weaver B."/>
            <person name="Pai G."/>
            <person name="Eisen J.A."/>
            <person name="Rahe E."/>
            <person name="Sheldon W.M."/>
            <person name="Ye W."/>
            <person name="Miller T.R."/>
            <person name="Carlton J."/>
            <person name="Rasko D.A."/>
            <person name="Paulsen I.T."/>
            <person name="Ren Q."/>
            <person name="Daugherty S.C."/>
            <person name="DeBoy R.T."/>
            <person name="Dodson R.J."/>
            <person name="Durkin A.S."/>
            <person name="Madupu R."/>
            <person name="Nelson W.C."/>
            <person name="Sullivan S.A."/>
            <person name="Rosovitz M.J."/>
            <person name="Haft D.H."/>
            <person name="Selengut J."/>
            <person name="Ward N."/>
        </authorList>
    </citation>
    <scope>NUCLEOTIDE SEQUENCE [LARGE SCALE GENOMIC DNA]</scope>
    <source>
        <strain>ATCC 700808 / DSM 15171 / DSS-3</strain>
    </source>
</reference>
<reference key="2">
    <citation type="journal article" date="2014" name="Stand. Genomic Sci.">
        <title>An updated genome annotation for the model marine bacterium Ruegeria pomeroyi DSS-3.</title>
        <authorList>
            <person name="Rivers A.R."/>
            <person name="Smith C.B."/>
            <person name="Moran M.A."/>
        </authorList>
    </citation>
    <scope>GENOME REANNOTATION</scope>
    <source>
        <strain>ATCC 700808 / DSM 15171 / DSS-3</strain>
    </source>
</reference>